<accession>C5A1Y3</accession>
<gene>
    <name evidence="1" type="primary">pyrE</name>
    <name type="ordered locus">TGAM_1900</name>
</gene>
<feature type="chain" id="PRO_1000213865" description="Orotate phosphoribosyltransferase">
    <location>
        <begin position="1"/>
        <end position="189"/>
    </location>
</feature>
<feature type="binding site" evidence="1">
    <location>
        <position position="94"/>
    </location>
    <ligand>
        <name>5-phospho-alpha-D-ribose 1-diphosphate</name>
        <dbReference type="ChEBI" id="CHEBI:58017"/>
        <note>ligand shared between dimeric partners</note>
    </ligand>
</feature>
<feature type="binding site" description="in other chain" evidence="1">
    <location>
        <position position="95"/>
    </location>
    <ligand>
        <name>5-phospho-alpha-D-ribose 1-diphosphate</name>
        <dbReference type="ChEBI" id="CHEBI:58017"/>
        <note>ligand shared between dimeric partners</note>
    </ligand>
</feature>
<feature type="binding site" evidence="1">
    <location>
        <position position="98"/>
    </location>
    <ligand>
        <name>5-phospho-alpha-D-ribose 1-diphosphate</name>
        <dbReference type="ChEBI" id="CHEBI:58017"/>
        <note>ligand shared between dimeric partners</note>
    </ligand>
</feature>
<feature type="binding site" description="in other chain" evidence="1">
    <location>
        <begin position="120"/>
        <end position="128"/>
    </location>
    <ligand>
        <name>5-phospho-alpha-D-ribose 1-diphosphate</name>
        <dbReference type="ChEBI" id="CHEBI:58017"/>
        <note>ligand shared between dimeric partners</note>
    </ligand>
</feature>
<feature type="binding site" evidence="1">
    <location>
        <position position="124"/>
    </location>
    <ligand>
        <name>orotate</name>
        <dbReference type="ChEBI" id="CHEBI:30839"/>
    </ligand>
</feature>
<feature type="binding site" evidence="1">
    <location>
        <position position="152"/>
    </location>
    <ligand>
        <name>orotate</name>
        <dbReference type="ChEBI" id="CHEBI:30839"/>
    </ligand>
</feature>
<proteinExistence type="inferred from homology"/>
<comment type="function">
    <text evidence="1">Catalyzes the transfer of a ribosyl phosphate group from 5-phosphoribose 1-diphosphate to orotate, leading to the formation of orotidine monophosphate (OMP).</text>
</comment>
<comment type="catalytic activity">
    <reaction evidence="1">
        <text>orotidine 5'-phosphate + diphosphate = orotate + 5-phospho-alpha-D-ribose 1-diphosphate</text>
        <dbReference type="Rhea" id="RHEA:10380"/>
        <dbReference type="ChEBI" id="CHEBI:30839"/>
        <dbReference type="ChEBI" id="CHEBI:33019"/>
        <dbReference type="ChEBI" id="CHEBI:57538"/>
        <dbReference type="ChEBI" id="CHEBI:58017"/>
        <dbReference type="EC" id="2.4.2.10"/>
    </reaction>
</comment>
<comment type="cofactor">
    <cofactor evidence="1">
        <name>Mg(2+)</name>
        <dbReference type="ChEBI" id="CHEBI:18420"/>
    </cofactor>
</comment>
<comment type="pathway">
    <text evidence="1">Pyrimidine metabolism; UMP biosynthesis via de novo pathway; UMP from orotate: step 1/2.</text>
</comment>
<comment type="subunit">
    <text evidence="1">Homodimer.</text>
</comment>
<comment type="similarity">
    <text evidence="1">Belongs to the purine/pyrimidine phosphoribosyltransferase family. PyrE subfamily.</text>
</comment>
<name>PYRE_THEGJ</name>
<keyword id="KW-0328">Glycosyltransferase</keyword>
<keyword id="KW-0460">Magnesium</keyword>
<keyword id="KW-0665">Pyrimidine biosynthesis</keyword>
<keyword id="KW-1185">Reference proteome</keyword>
<keyword id="KW-0808">Transferase</keyword>
<organism>
    <name type="scientific">Thermococcus gammatolerans (strain DSM 15229 / JCM 11827 / EJ3)</name>
    <dbReference type="NCBI Taxonomy" id="593117"/>
    <lineage>
        <taxon>Archaea</taxon>
        <taxon>Methanobacteriati</taxon>
        <taxon>Methanobacteriota</taxon>
        <taxon>Thermococci</taxon>
        <taxon>Thermococcales</taxon>
        <taxon>Thermococcaceae</taxon>
        <taxon>Thermococcus</taxon>
    </lineage>
</organism>
<dbReference type="EC" id="2.4.2.10" evidence="1"/>
<dbReference type="EMBL" id="CP001398">
    <property type="protein sequence ID" value="ACS34402.1"/>
    <property type="molecule type" value="Genomic_DNA"/>
</dbReference>
<dbReference type="RefSeq" id="WP_015859508.1">
    <property type="nucleotide sequence ID" value="NC_012804.1"/>
</dbReference>
<dbReference type="SMR" id="C5A1Y3"/>
<dbReference type="STRING" id="593117.TGAM_1900"/>
<dbReference type="PaxDb" id="593117-TGAM_1900"/>
<dbReference type="GeneID" id="7988304"/>
<dbReference type="KEGG" id="tga:TGAM_1900"/>
<dbReference type="PATRIC" id="fig|593117.10.peg.1911"/>
<dbReference type="eggNOG" id="arCOG00029">
    <property type="taxonomic scope" value="Archaea"/>
</dbReference>
<dbReference type="HOGENOM" id="CLU_074878_2_0_2"/>
<dbReference type="OrthoDB" id="9089at2157"/>
<dbReference type="UniPathway" id="UPA00070">
    <property type="reaction ID" value="UER00119"/>
</dbReference>
<dbReference type="Proteomes" id="UP000001488">
    <property type="component" value="Chromosome"/>
</dbReference>
<dbReference type="GO" id="GO:0000287">
    <property type="term" value="F:magnesium ion binding"/>
    <property type="evidence" value="ECO:0007669"/>
    <property type="project" value="UniProtKB-UniRule"/>
</dbReference>
<dbReference type="GO" id="GO:0004588">
    <property type="term" value="F:orotate phosphoribosyltransferase activity"/>
    <property type="evidence" value="ECO:0007669"/>
    <property type="project" value="UniProtKB-UniRule"/>
</dbReference>
<dbReference type="GO" id="GO:0044205">
    <property type="term" value="P:'de novo' UMP biosynthetic process"/>
    <property type="evidence" value="ECO:0007669"/>
    <property type="project" value="UniProtKB-UniRule"/>
</dbReference>
<dbReference type="GO" id="GO:0019856">
    <property type="term" value="P:pyrimidine nucleobase biosynthetic process"/>
    <property type="evidence" value="ECO:0007669"/>
    <property type="project" value="TreeGrafter"/>
</dbReference>
<dbReference type="CDD" id="cd06223">
    <property type="entry name" value="PRTases_typeI"/>
    <property type="match status" value="1"/>
</dbReference>
<dbReference type="Gene3D" id="3.40.50.2020">
    <property type="match status" value="1"/>
</dbReference>
<dbReference type="HAMAP" id="MF_01208">
    <property type="entry name" value="PyrE"/>
    <property type="match status" value="1"/>
</dbReference>
<dbReference type="InterPro" id="IPR023031">
    <property type="entry name" value="OPRT"/>
</dbReference>
<dbReference type="InterPro" id="IPR004467">
    <property type="entry name" value="Or_phspho_trans_dom"/>
</dbReference>
<dbReference type="InterPro" id="IPR000836">
    <property type="entry name" value="PRibTrfase_dom"/>
</dbReference>
<dbReference type="InterPro" id="IPR029057">
    <property type="entry name" value="PRTase-like"/>
</dbReference>
<dbReference type="NCBIfam" id="TIGR00336">
    <property type="entry name" value="pyrE"/>
    <property type="match status" value="1"/>
</dbReference>
<dbReference type="PANTHER" id="PTHR19278">
    <property type="entry name" value="OROTATE PHOSPHORIBOSYLTRANSFERASE"/>
    <property type="match status" value="1"/>
</dbReference>
<dbReference type="PANTHER" id="PTHR19278:SF9">
    <property type="entry name" value="URIDINE 5'-MONOPHOSPHATE SYNTHASE"/>
    <property type="match status" value="1"/>
</dbReference>
<dbReference type="Pfam" id="PF00156">
    <property type="entry name" value="Pribosyltran"/>
    <property type="match status" value="1"/>
</dbReference>
<dbReference type="SUPFAM" id="SSF53271">
    <property type="entry name" value="PRTase-like"/>
    <property type="match status" value="1"/>
</dbReference>
<sequence length="189" mass="20138">MIEAKDRLIDKMLESGAILFGHFVLSSGKESDYYINVKKVVTDPDALELMAGLIAGLVQRVGIDFDRVAGPELGAVPIATAVSLKTGKPLVIVRKKPKGYGTGSQIEGDVKEGDRILLVEDVTTTGGSVLRAAEVLESLGARIAAIAVVVDREEGAEGSITSKGYTFLPVIRVSELLERKETVKGRESD</sequence>
<protein>
    <recommendedName>
        <fullName evidence="1">Orotate phosphoribosyltransferase</fullName>
        <shortName evidence="1">OPRT</shortName>
        <shortName evidence="1">OPRTase</shortName>
        <ecNumber evidence="1">2.4.2.10</ecNumber>
    </recommendedName>
</protein>
<reference key="1">
    <citation type="journal article" date="2007" name="Genome Biol.">
        <title>Genome analysis and genome-wide proteomics of Thermococcus gammatolerans, the most radioresistant organism known amongst the Archaea.</title>
        <authorList>
            <person name="Zivanovic Y."/>
            <person name="Armengaud J."/>
            <person name="Lagorce A."/>
            <person name="Leplat C."/>
            <person name="Guerin P."/>
            <person name="Dutertre M."/>
            <person name="Anthouard V."/>
            <person name="Forterre P."/>
            <person name="Wincker P."/>
            <person name="Confalonieri F."/>
        </authorList>
    </citation>
    <scope>NUCLEOTIDE SEQUENCE [LARGE SCALE GENOMIC DNA]</scope>
    <source>
        <strain>DSM 15229 / JCM 11827 / EJ3</strain>
    </source>
</reference>
<evidence type="ECO:0000255" key="1">
    <source>
        <dbReference type="HAMAP-Rule" id="MF_01208"/>
    </source>
</evidence>